<sequence length="181" mass="20906">MHGSALLCCCLVLLAGVGASRHQSTLLEDDCTHFPASLPHMLRELRAAFGRVKIFFQMKDKLDNILLTGSLLEDFKSYLGCQALSEMIQFYLEEVMPRAENHDPDIKNHVNSLGEKLKTLRLRLRLRRCHRFLPCENKSKAVEQVKSAFSKLQEKGVYKAMSEFDIFINYIETYMTMRMKI</sequence>
<dbReference type="EMBL" id="U33843">
    <property type="protein sequence ID" value="AAA76694.1"/>
    <property type="molecule type" value="mRNA"/>
</dbReference>
<dbReference type="RefSeq" id="NP_001003077.1">
    <property type="nucleotide sequence ID" value="NM_001003077.1"/>
</dbReference>
<dbReference type="SMR" id="P48411"/>
<dbReference type="FunCoup" id="P48411">
    <property type="interactions" value="224"/>
</dbReference>
<dbReference type="STRING" id="9615.ENSCAFP00000016812"/>
<dbReference type="GlyCosmos" id="P48411">
    <property type="glycosylation" value="1 site, No reported glycans"/>
</dbReference>
<dbReference type="PaxDb" id="9612-ENSCAFP00000016812"/>
<dbReference type="GeneID" id="403628"/>
<dbReference type="KEGG" id="cfa:403628"/>
<dbReference type="CTD" id="3586"/>
<dbReference type="eggNOG" id="ENOG502S22U">
    <property type="taxonomic scope" value="Eukaryota"/>
</dbReference>
<dbReference type="InParanoid" id="P48411"/>
<dbReference type="OrthoDB" id="9931894at2759"/>
<dbReference type="Proteomes" id="UP000002254">
    <property type="component" value="Unplaced"/>
</dbReference>
<dbReference type="Proteomes" id="UP000694429">
    <property type="component" value="Unplaced"/>
</dbReference>
<dbReference type="Proteomes" id="UP000694542">
    <property type="component" value="Unplaced"/>
</dbReference>
<dbReference type="Proteomes" id="UP000805418">
    <property type="component" value="Unplaced"/>
</dbReference>
<dbReference type="GO" id="GO:0005576">
    <property type="term" value="C:extracellular region"/>
    <property type="evidence" value="ECO:0000303"/>
    <property type="project" value="UniProtKB"/>
</dbReference>
<dbReference type="GO" id="GO:0005615">
    <property type="term" value="C:extracellular space"/>
    <property type="evidence" value="ECO:0000250"/>
    <property type="project" value="UniProtKB"/>
</dbReference>
<dbReference type="GO" id="GO:0005125">
    <property type="term" value="F:cytokine activity"/>
    <property type="evidence" value="ECO:0000318"/>
    <property type="project" value="GO_Central"/>
</dbReference>
<dbReference type="GO" id="GO:0005141">
    <property type="term" value="F:interleukin-10 receptor binding"/>
    <property type="evidence" value="ECO:0000303"/>
    <property type="project" value="UniProtKB"/>
</dbReference>
<dbReference type="GO" id="GO:0019886">
    <property type="term" value="P:antigen processing and presentation of exogenous peptide antigen via MHC class II"/>
    <property type="evidence" value="ECO:0000303"/>
    <property type="project" value="UniProtKB"/>
</dbReference>
<dbReference type="GO" id="GO:0006955">
    <property type="term" value="P:immune response"/>
    <property type="evidence" value="ECO:0000318"/>
    <property type="project" value="GO_Central"/>
</dbReference>
<dbReference type="GO" id="GO:0140105">
    <property type="term" value="P:interleukin-10-mediated signaling pathway"/>
    <property type="evidence" value="ECO:0000318"/>
    <property type="project" value="GO_Central"/>
</dbReference>
<dbReference type="GO" id="GO:0030889">
    <property type="term" value="P:negative regulation of B cell proliferation"/>
    <property type="evidence" value="ECO:0000250"/>
    <property type="project" value="UniProtKB"/>
</dbReference>
<dbReference type="GO" id="GO:0002719">
    <property type="term" value="P:negative regulation of cytokine production involved in immune response"/>
    <property type="evidence" value="ECO:0000250"/>
    <property type="project" value="UniProtKB"/>
</dbReference>
<dbReference type="GO" id="GO:0050728">
    <property type="term" value="P:negative regulation of inflammatory response"/>
    <property type="evidence" value="ECO:0000250"/>
    <property type="project" value="UniProtKB"/>
</dbReference>
<dbReference type="GO" id="GO:0032715">
    <property type="term" value="P:negative regulation of interleukin-6 production"/>
    <property type="evidence" value="ECO:0000250"/>
    <property type="project" value="UniProtKB"/>
</dbReference>
<dbReference type="GO" id="GO:0051045">
    <property type="term" value="P:negative regulation of membrane protein ectodomain proteolysis"/>
    <property type="evidence" value="ECO:0000250"/>
    <property type="project" value="UniProtKB"/>
</dbReference>
<dbReference type="GO" id="GO:0002904">
    <property type="term" value="P:positive regulation of B cell apoptotic process"/>
    <property type="evidence" value="ECO:0000250"/>
    <property type="project" value="UniProtKB"/>
</dbReference>
<dbReference type="GO" id="GO:0001819">
    <property type="term" value="P:positive regulation of cytokine production"/>
    <property type="evidence" value="ECO:0000250"/>
    <property type="project" value="UniProtKB"/>
</dbReference>
<dbReference type="GO" id="GO:0051091">
    <property type="term" value="P:positive regulation of DNA-binding transcription factor activity"/>
    <property type="evidence" value="ECO:0000250"/>
    <property type="project" value="UniProtKB"/>
</dbReference>
<dbReference type="GO" id="GO:0045893">
    <property type="term" value="P:positive regulation of DNA-templated transcription"/>
    <property type="evidence" value="ECO:0000250"/>
    <property type="project" value="UniProtKB"/>
</dbReference>
<dbReference type="GO" id="GO:0046427">
    <property type="term" value="P:positive regulation of receptor signaling pathway via JAK-STAT"/>
    <property type="evidence" value="ECO:0000318"/>
    <property type="project" value="GO_Central"/>
</dbReference>
<dbReference type="GO" id="GO:0051384">
    <property type="term" value="P:response to glucocorticoid"/>
    <property type="evidence" value="ECO:0000250"/>
    <property type="project" value="UniProtKB"/>
</dbReference>
<dbReference type="GO" id="GO:0002237">
    <property type="term" value="P:response to molecule of bacterial origin"/>
    <property type="evidence" value="ECO:0000250"/>
    <property type="project" value="UniProtKB"/>
</dbReference>
<dbReference type="FunFam" id="1.20.1250.10:FF:000011">
    <property type="entry name" value="Interleukin-10"/>
    <property type="match status" value="1"/>
</dbReference>
<dbReference type="Gene3D" id="1.20.1250.10">
    <property type="match status" value="1"/>
</dbReference>
<dbReference type="InterPro" id="IPR009079">
    <property type="entry name" value="4_helix_cytokine-like_core"/>
</dbReference>
<dbReference type="InterPro" id="IPR000098">
    <property type="entry name" value="IL-10"/>
</dbReference>
<dbReference type="InterPro" id="IPR020443">
    <property type="entry name" value="IL-10/19/20/24/26"/>
</dbReference>
<dbReference type="InterPro" id="IPR020423">
    <property type="entry name" value="IL-10_CS"/>
</dbReference>
<dbReference type="PANTHER" id="PTHR48482:SF5">
    <property type="entry name" value="INTERLEUKIN-10"/>
    <property type="match status" value="1"/>
</dbReference>
<dbReference type="PANTHER" id="PTHR48482">
    <property type="entry name" value="INTERLEUKIN-19-RELATED"/>
    <property type="match status" value="1"/>
</dbReference>
<dbReference type="Pfam" id="PF00726">
    <property type="entry name" value="IL10"/>
    <property type="match status" value="1"/>
</dbReference>
<dbReference type="PRINTS" id="PR01294">
    <property type="entry name" value="INTRLEUKIN10"/>
</dbReference>
<dbReference type="SMART" id="SM00188">
    <property type="entry name" value="IL10"/>
    <property type="match status" value="1"/>
</dbReference>
<dbReference type="SUPFAM" id="SSF47266">
    <property type="entry name" value="4-helical cytokines"/>
    <property type="match status" value="1"/>
</dbReference>
<dbReference type="PROSITE" id="PS00520">
    <property type="entry name" value="INTERLEUKIN_10"/>
    <property type="match status" value="1"/>
</dbReference>
<keyword id="KW-0202">Cytokine</keyword>
<keyword id="KW-1015">Disulfide bond</keyword>
<keyword id="KW-0325">Glycoprotein</keyword>
<keyword id="KW-1185">Reference proteome</keyword>
<keyword id="KW-0964">Secreted</keyword>
<keyword id="KW-0732">Signal</keyword>
<feature type="signal peptide" evidence="4">
    <location>
        <begin position="1"/>
        <end position="19"/>
    </location>
</feature>
<feature type="chain" id="PRO_0000015354" description="Interleukin-10">
    <location>
        <begin position="20"/>
        <end position="181"/>
    </location>
</feature>
<feature type="glycosylation site" description="N-linked (GlcNAc...) asparagine" evidence="4">
    <location>
        <position position="137"/>
    </location>
</feature>
<feature type="disulfide bond" evidence="1">
    <location>
        <begin position="31"/>
        <end position="129"/>
    </location>
</feature>
<feature type="disulfide bond" evidence="1">
    <location>
        <begin position="81"/>
        <end position="135"/>
    </location>
</feature>
<proteinExistence type="evidence at transcript level"/>
<reference key="1">
    <citation type="journal article" date="1995" name="J. Interferon Cytokine Res.">
        <title>Cloning and expression of canine interleukin-10.</title>
        <authorList>
            <person name="Lu P."/>
            <person name="Zucker K."/>
            <person name="Fuller L."/>
            <person name="Tzakis A."/>
            <person name="Esquenazi V."/>
            <person name="Miller J."/>
        </authorList>
    </citation>
    <scope>NUCLEOTIDE SEQUENCE [MRNA]</scope>
    <source>
        <strain>Beagle</strain>
    </source>
</reference>
<protein>
    <recommendedName>
        <fullName>Interleukin-10</fullName>
        <shortName>IL-10</shortName>
    </recommendedName>
    <alternativeName>
        <fullName>Cytokine synthesis inhibitory factor</fullName>
        <shortName>CSIF</shortName>
    </alternativeName>
</protein>
<comment type="function">
    <text evidence="2 3">Major immune regulatory cytokine that acts on many cells of the immune system where it has profound anti-inflammatory functions, limiting excessive tissue disruption caused by inflammation. Mechanistically, IL10 binds to its heterotetrameric receptor comprising IL10RA and IL10RB leading to JAK1 and STAT2-mediated phosphorylation of STAT3. In turn, STAT3 translocates to the nucleus where it drives expression of anti-inflammatory mediators. Targets antigen-presenting cells (APCs) such as macrophages and monocytes and inhibits their release of pro-inflammatory cytokines including granulocyte-macrophage colony-stimulating factor /GM-CSF, granulocyte colony-stimulating factor/G-CSF, IL-1 alpha, IL-1 beta, IL-6, IL-8 and TNF-alpha. Also interferes with antigen presentation by reducing the expression of MHC-class II and co-stimulatory molecules, thereby inhibiting their ability to induce T cell activation (By similarity). In addition, controls the inflammatory response of macrophages by reprogramming essential metabolic pathways including mTOR signaling (By similarity).</text>
</comment>
<comment type="subunit">
    <text evidence="3">Homodimer. Interacts with IL10RA and IL10RB.</text>
</comment>
<comment type="subcellular location">
    <subcellularLocation>
        <location evidence="3">Secreted</location>
    </subcellularLocation>
</comment>
<comment type="similarity">
    <text evidence="5">Belongs to the IL-10 family.</text>
</comment>
<organism>
    <name type="scientific">Canis lupus familiaris</name>
    <name type="common">Dog</name>
    <name type="synonym">Canis familiaris</name>
    <dbReference type="NCBI Taxonomy" id="9615"/>
    <lineage>
        <taxon>Eukaryota</taxon>
        <taxon>Metazoa</taxon>
        <taxon>Chordata</taxon>
        <taxon>Craniata</taxon>
        <taxon>Vertebrata</taxon>
        <taxon>Euteleostomi</taxon>
        <taxon>Mammalia</taxon>
        <taxon>Eutheria</taxon>
        <taxon>Laurasiatheria</taxon>
        <taxon>Carnivora</taxon>
        <taxon>Caniformia</taxon>
        <taxon>Canidae</taxon>
        <taxon>Canis</taxon>
    </lineage>
</organism>
<gene>
    <name type="primary">IL10</name>
</gene>
<name>IL10_CANLF</name>
<evidence type="ECO:0000250" key="1"/>
<evidence type="ECO:0000250" key="2">
    <source>
        <dbReference type="UniProtKB" id="P18893"/>
    </source>
</evidence>
<evidence type="ECO:0000250" key="3">
    <source>
        <dbReference type="UniProtKB" id="P22301"/>
    </source>
</evidence>
<evidence type="ECO:0000255" key="4"/>
<evidence type="ECO:0000305" key="5"/>
<accession>P48411</accession>